<accession>Q55C50</accession>
<evidence type="ECO:0000250" key="1"/>
<evidence type="ECO:0000256" key="2">
    <source>
        <dbReference type="SAM" id="MobiDB-lite"/>
    </source>
</evidence>
<evidence type="ECO:0000305" key="3"/>
<sequence length="250" mass="28870">MSSMNLRRLLPQRAKQERPQPESSKKKGFLERKKDYVERAKDYNNKRDTLKKLKLQAAFKNPDEFNYKMISSKLVDGVHSEISKTSLKKEQIIDIKTQDILYLQSKRRADDKKIERLQATLQYMDSGLEPTEQIIYVDDEKEVKNFSATKYFDTVPDAFNGSLSTIPKISKLKEGSLVVNPKTAPTLGQLEAMTATSYKELKERKLRRDQLFKAEMDLSKSKIQLKRGTKSGVTKKVGKKEVVFKQVRSK</sequence>
<proteinExistence type="inferred from homology"/>
<dbReference type="EMBL" id="AAFI02000005">
    <property type="protein sequence ID" value="EAL72465.1"/>
    <property type="molecule type" value="Genomic_DNA"/>
</dbReference>
<dbReference type="RefSeq" id="XP_646631.1">
    <property type="nucleotide sequence ID" value="XM_641539.1"/>
</dbReference>
<dbReference type="SMR" id="Q55C50"/>
<dbReference type="FunCoup" id="Q55C50">
    <property type="interactions" value="477"/>
</dbReference>
<dbReference type="STRING" id="44689.Q55C50"/>
<dbReference type="PaxDb" id="44689-DDB0237489"/>
<dbReference type="EnsemblProtists" id="EAL72465">
    <property type="protein sequence ID" value="EAL72465"/>
    <property type="gene ID" value="DDB_G0270230"/>
</dbReference>
<dbReference type="GeneID" id="8617603"/>
<dbReference type="KEGG" id="ddi:DDB_G0270230"/>
<dbReference type="dictyBase" id="DDB_G0270230">
    <property type="gene designation" value="utp11"/>
</dbReference>
<dbReference type="VEuPathDB" id="AmoebaDB:DDB_G0270230"/>
<dbReference type="eggNOG" id="KOG3237">
    <property type="taxonomic scope" value="Eukaryota"/>
</dbReference>
<dbReference type="HOGENOM" id="CLU_061887_0_2_1"/>
<dbReference type="InParanoid" id="Q55C50"/>
<dbReference type="OMA" id="DQLFKAE"/>
<dbReference type="PhylomeDB" id="Q55C50"/>
<dbReference type="Reactome" id="R-DDI-6791226">
    <property type="pathway name" value="Major pathway of rRNA processing in the nucleolus and cytosol"/>
</dbReference>
<dbReference type="PRO" id="PR:Q55C50"/>
<dbReference type="Proteomes" id="UP000002195">
    <property type="component" value="Chromosome 1"/>
</dbReference>
<dbReference type="GO" id="GO:0005730">
    <property type="term" value="C:nucleolus"/>
    <property type="evidence" value="ECO:0000318"/>
    <property type="project" value="GO_Central"/>
</dbReference>
<dbReference type="GO" id="GO:0032040">
    <property type="term" value="C:small-subunit processome"/>
    <property type="evidence" value="ECO:0000318"/>
    <property type="project" value="GO_Central"/>
</dbReference>
<dbReference type="GO" id="GO:0006364">
    <property type="term" value="P:rRNA processing"/>
    <property type="evidence" value="ECO:0007669"/>
    <property type="project" value="UniProtKB-KW"/>
</dbReference>
<dbReference type="InterPro" id="IPR007144">
    <property type="entry name" value="SSU_processome_Utp11"/>
</dbReference>
<dbReference type="PANTHER" id="PTHR12838">
    <property type="entry name" value="U3 SMALL NUCLEOLAR RNA-ASSOCIATED PROTEIN 11"/>
    <property type="match status" value="1"/>
</dbReference>
<dbReference type="PANTHER" id="PTHR12838:SF0">
    <property type="entry name" value="U3 SMALL NUCLEOLAR RNA-ASSOCIATED PROTEIN 11-RELATED"/>
    <property type="match status" value="1"/>
</dbReference>
<dbReference type="Pfam" id="PF03998">
    <property type="entry name" value="Utp11"/>
    <property type="match status" value="1"/>
</dbReference>
<dbReference type="PIRSF" id="PIRSF015952">
    <property type="entry name" value="U3snoRNP11"/>
    <property type="match status" value="1"/>
</dbReference>
<comment type="function">
    <text evidence="1">Involved in nucleolar processing of pre-18S ribosomal RNA.</text>
</comment>
<comment type="subunit">
    <text evidence="1">Component of the ribosomal small subunit (SSU) processome.</text>
</comment>
<comment type="subcellular location">
    <subcellularLocation>
        <location evidence="1">Nucleus</location>
        <location evidence="1">Nucleolus</location>
    </subcellularLocation>
</comment>
<comment type="similarity">
    <text evidence="3">Belongs to the UTP11 family.</text>
</comment>
<keyword id="KW-0539">Nucleus</keyword>
<keyword id="KW-1185">Reference proteome</keyword>
<keyword id="KW-0698">rRNA processing</keyword>
<reference key="1">
    <citation type="journal article" date="2005" name="Nature">
        <title>The genome of the social amoeba Dictyostelium discoideum.</title>
        <authorList>
            <person name="Eichinger L."/>
            <person name="Pachebat J.A."/>
            <person name="Gloeckner G."/>
            <person name="Rajandream M.A."/>
            <person name="Sucgang R."/>
            <person name="Berriman M."/>
            <person name="Song J."/>
            <person name="Olsen R."/>
            <person name="Szafranski K."/>
            <person name="Xu Q."/>
            <person name="Tunggal B."/>
            <person name="Kummerfeld S."/>
            <person name="Madera M."/>
            <person name="Konfortov B.A."/>
            <person name="Rivero F."/>
            <person name="Bankier A.T."/>
            <person name="Lehmann R."/>
            <person name="Hamlin N."/>
            <person name="Davies R."/>
            <person name="Gaudet P."/>
            <person name="Fey P."/>
            <person name="Pilcher K."/>
            <person name="Chen G."/>
            <person name="Saunders D."/>
            <person name="Sodergren E.J."/>
            <person name="Davis P."/>
            <person name="Kerhornou A."/>
            <person name="Nie X."/>
            <person name="Hall N."/>
            <person name="Anjard C."/>
            <person name="Hemphill L."/>
            <person name="Bason N."/>
            <person name="Farbrother P."/>
            <person name="Desany B."/>
            <person name="Just E."/>
            <person name="Morio T."/>
            <person name="Rost R."/>
            <person name="Churcher C.M."/>
            <person name="Cooper J."/>
            <person name="Haydock S."/>
            <person name="van Driessche N."/>
            <person name="Cronin A."/>
            <person name="Goodhead I."/>
            <person name="Muzny D.M."/>
            <person name="Mourier T."/>
            <person name="Pain A."/>
            <person name="Lu M."/>
            <person name="Harper D."/>
            <person name="Lindsay R."/>
            <person name="Hauser H."/>
            <person name="James K.D."/>
            <person name="Quiles M."/>
            <person name="Madan Babu M."/>
            <person name="Saito T."/>
            <person name="Buchrieser C."/>
            <person name="Wardroper A."/>
            <person name="Felder M."/>
            <person name="Thangavelu M."/>
            <person name="Johnson D."/>
            <person name="Knights A."/>
            <person name="Loulseged H."/>
            <person name="Mungall K.L."/>
            <person name="Oliver K."/>
            <person name="Price C."/>
            <person name="Quail M.A."/>
            <person name="Urushihara H."/>
            <person name="Hernandez J."/>
            <person name="Rabbinowitsch E."/>
            <person name="Steffen D."/>
            <person name="Sanders M."/>
            <person name="Ma J."/>
            <person name="Kohara Y."/>
            <person name="Sharp S."/>
            <person name="Simmonds M.N."/>
            <person name="Spiegler S."/>
            <person name="Tivey A."/>
            <person name="Sugano S."/>
            <person name="White B."/>
            <person name="Walker D."/>
            <person name="Woodward J.R."/>
            <person name="Winckler T."/>
            <person name="Tanaka Y."/>
            <person name="Shaulsky G."/>
            <person name="Schleicher M."/>
            <person name="Weinstock G.M."/>
            <person name="Rosenthal A."/>
            <person name="Cox E.C."/>
            <person name="Chisholm R.L."/>
            <person name="Gibbs R.A."/>
            <person name="Loomis W.F."/>
            <person name="Platzer M."/>
            <person name="Kay R.R."/>
            <person name="Williams J.G."/>
            <person name="Dear P.H."/>
            <person name="Noegel A.A."/>
            <person name="Barrell B.G."/>
            <person name="Kuspa A."/>
        </authorList>
    </citation>
    <scope>NUCLEOTIDE SEQUENCE [LARGE SCALE GENOMIC DNA]</scope>
    <source>
        <strain>AX4</strain>
    </source>
</reference>
<name>UTP11_DICDI</name>
<gene>
    <name type="primary">utp11</name>
    <name type="ORF">DDB_G0270230</name>
</gene>
<feature type="chain" id="PRO_0000327779" description="Probable U3 small nucleolar RNA-associated protein 11">
    <location>
        <begin position="1"/>
        <end position="250"/>
    </location>
</feature>
<feature type="region of interest" description="Disordered" evidence="2">
    <location>
        <begin position="1"/>
        <end position="31"/>
    </location>
</feature>
<feature type="compositionally biased region" description="Basic and acidic residues" evidence="2">
    <location>
        <begin position="14"/>
        <end position="31"/>
    </location>
</feature>
<protein>
    <recommendedName>
        <fullName>Probable U3 small nucleolar RNA-associated protein 11</fullName>
        <shortName>U3 snoRNA-associated protein 11</shortName>
    </recommendedName>
</protein>
<organism>
    <name type="scientific">Dictyostelium discoideum</name>
    <name type="common">Social amoeba</name>
    <dbReference type="NCBI Taxonomy" id="44689"/>
    <lineage>
        <taxon>Eukaryota</taxon>
        <taxon>Amoebozoa</taxon>
        <taxon>Evosea</taxon>
        <taxon>Eumycetozoa</taxon>
        <taxon>Dictyostelia</taxon>
        <taxon>Dictyosteliales</taxon>
        <taxon>Dictyosteliaceae</taxon>
        <taxon>Dictyostelium</taxon>
    </lineage>
</organism>